<feature type="chain" id="PRO_0000408993" description="Energy-coupling factor transporter transmembrane protein EcfT">
    <location>
        <begin position="1"/>
        <end position="277"/>
    </location>
</feature>
<feature type="transmembrane region" description="Helical" evidence="1">
    <location>
        <begin position="39"/>
        <end position="59"/>
    </location>
</feature>
<feature type="transmembrane region" description="Helical" evidence="1">
    <location>
        <begin position="61"/>
        <end position="81"/>
    </location>
</feature>
<feature type="transmembrane region" description="Helical" evidence="1">
    <location>
        <begin position="85"/>
        <end position="105"/>
    </location>
</feature>
<feature type="transmembrane region" description="Helical" evidence="1">
    <location>
        <begin position="121"/>
        <end position="141"/>
    </location>
</feature>
<feature type="transmembrane region" description="Helical" evidence="1">
    <location>
        <begin position="163"/>
        <end position="183"/>
    </location>
</feature>
<feature type="transmembrane region" description="Helical" evidence="1">
    <location>
        <begin position="254"/>
        <end position="274"/>
    </location>
</feature>
<accession>A8YXN4</accession>
<name>ECFT_LACH4</name>
<protein>
    <recommendedName>
        <fullName evidence="1">Energy-coupling factor transporter transmembrane protein EcfT</fullName>
        <shortName evidence="1">ECF transporter T component EcfT</shortName>
    </recommendedName>
</protein>
<keyword id="KW-1003">Cell membrane</keyword>
<keyword id="KW-0472">Membrane</keyword>
<keyword id="KW-0812">Transmembrane</keyword>
<keyword id="KW-1133">Transmembrane helix</keyword>
<keyword id="KW-0813">Transport</keyword>
<proteinExistence type="inferred from homology"/>
<gene>
    <name evidence="1" type="primary">ecfT</name>
    <name type="ordered locus">lhv_0341</name>
</gene>
<dbReference type="EMBL" id="CP000517">
    <property type="protein sequence ID" value="ABX26565.1"/>
    <property type="molecule type" value="Genomic_DNA"/>
</dbReference>
<dbReference type="SMR" id="A8YXN4"/>
<dbReference type="KEGG" id="lhe:lhv_0341"/>
<dbReference type="eggNOG" id="COG0619">
    <property type="taxonomic scope" value="Bacteria"/>
</dbReference>
<dbReference type="HOGENOM" id="CLU_056469_2_2_9"/>
<dbReference type="Proteomes" id="UP000000790">
    <property type="component" value="Chromosome"/>
</dbReference>
<dbReference type="GO" id="GO:0005886">
    <property type="term" value="C:plasma membrane"/>
    <property type="evidence" value="ECO:0007669"/>
    <property type="project" value="UniProtKB-SubCell"/>
</dbReference>
<dbReference type="GO" id="GO:0022857">
    <property type="term" value="F:transmembrane transporter activity"/>
    <property type="evidence" value="ECO:0007669"/>
    <property type="project" value="UniProtKB-UniRule"/>
</dbReference>
<dbReference type="CDD" id="cd16914">
    <property type="entry name" value="EcfT"/>
    <property type="match status" value="1"/>
</dbReference>
<dbReference type="HAMAP" id="MF_01461">
    <property type="entry name" value="EcfT"/>
    <property type="match status" value="1"/>
</dbReference>
<dbReference type="InterPro" id="IPR003339">
    <property type="entry name" value="ABC/ECF_trnsptr_transmembrane"/>
</dbReference>
<dbReference type="InterPro" id="IPR024919">
    <property type="entry name" value="EcfT"/>
</dbReference>
<dbReference type="PANTHER" id="PTHR33514">
    <property type="entry name" value="PROTEIN ABCI12, CHLOROPLASTIC"/>
    <property type="match status" value="1"/>
</dbReference>
<dbReference type="PANTHER" id="PTHR33514:SF13">
    <property type="entry name" value="PROTEIN ABCI12, CHLOROPLASTIC"/>
    <property type="match status" value="1"/>
</dbReference>
<dbReference type="Pfam" id="PF02361">
    <property type="entry name" value="CbiQ"/>
    <property type="match status" value="1"/>
</dbReference>
<comment type="function">
    <text evidence="1">Transmembrane (T) component of an energy-coupling factor (ECF) ABC-transporter complex. Unlike classic ABC transporters this ECF transporter provides the energy necessary to transport a number of different substrates.</text>
</comment>
<comment type="subunit">
    <text evidence="1">Forms a stable energy-coupling factor (ECF) transporter complex composed of 2 membrane-embedded substrate-binding proteins (S component), 2 ATP-binding proteins (A component) and 2 transmembrane proteins (T component). May be able to interact with more than 1 S component at a time (By similarity).</text>
</comment>
<comment type="subcellular location">
    <subcellularLocation>
        <location evidence="1">Cell membrane</location>
        <topology evidence="1">Multi-pass membrane protein</topology>
    </subcellularLocation>
</comment>
<comment type="similarity">
    <text evidence="1">Belongs to the energy-coupling factor EcfT family.</text>
</comment>
<reference key="1">
    <citation type="journal article" date="2008" name="J. Bacteriol.">
        <title>Genome sequence of Lactobacillus helveticus: an organism distinguished by selective gene loss and IS element expansion.</title>
        <authorList>
            <person name="Callanan M."/>
            <person name="Kaleta P."/>
            <person name="O'Callaghan J."/>
            <person name="O'Sullivan O."/>
            <person name="Jordan K."/>
            <person name="McAuliffe O."/>
            <person name="Sangrador-Vegas A."/>
            <person name="Slattery L."/>
            <person name="Fitzgerald G.F."/>
            <person name="Beresford T."/>
            <person name="Ross R.P."/>
        </authorList>
    </citation>
    <scope>NUCLEOTIDE SEQUENCE [LARGE SCALE GENOMIC DNA]</scope>
    <source>
        <strain>DPC 4571</strain>
    </source>
</reference>
<organism>
    <name type="scientific">Lactobacillus helveticus (strain DPC 4571)</name>
    <dbReference type="NCBI Taxonomy" id="405566"/>
    <lineage>
        <taxon>Bacteria</taxon>
        <taxon>Bacillati</taxon>
        <taxon>Bacillota</taxon>
        <taxon>Bacilli</taxon>
        <taxon>Lactobacillales</taxon>
        <taxon>Lactobacillaceae</taxon>
        <taxon>Lactobacillus</taxon>
    </lineage>
</organism>
<evidence type="ECO:0000255" key="1">
    <source>
        <dbReference type="HAMAP-Rule" id="MF_01461"/>
    </source>
</evidence>
<sequence>MMGLRKMCRGSLMSKIIIGRYIPGDSLVYKMDPRGKLLITILFIWAIFLANNPITYAIITFFCFLAIIATGLKARVFWNGVKPLIGLIFFTSLLQLFFMTGGHVFWHWWIFSISSYGVENAIYIFIRFTLIILISTVMTVTTMPLEIADAMEWLLKPLKIFKVPVDEIALVISIALRFVPTLFDETLKIMNAQRSRGADFNDGGLIKRAKAIAPILVPLFIHSLETAIDLSTAMESRGYRGSAGRTKYRVLNWSKYDLISLAYFILLVGLLLIFRTH</sequence>